<reference key="1">
    <citation type="submission" date="2005-08" db="EMBL/GenBank/DDBJ databases">
        <title>Complete sequence of chromosome 1 of Synechococcus elongatus PCC 7942.</title>
        <authorList>
            <consortium name="US DOE Joint Genome Institute"/>
            <person name="Copeland A."/>
            <person name="Lucas S."/>
            <person name="Lapidus A."/>
            <person name="Barry K."/>
            <person name="Detter J.C."/>
            <person name="Glavina T."/>
            <person name="Hammon N."/>
            <person name="Israni S."/>
            <person name="Pitluck S."/>
            <person name="Schmutz J."/>
            <person name="Larimer F."/>
            <person name="Land M."/>
            <person name="Kyrpides N."/>
            <person name="Lykidis A."/>
            <person name="Golden S."/>
            <person name="Richardson P."/>
        </authorList>
    </citation>
    <scope>NUCLEOTIDE SEQUENCE [LARGE SCALE GENOMIC DNA]</scope>
    <source>
        <strain>ATCC 33912 / PCC 7942 / FACHB-805</strain>
    </source>
</reference>
<reference key="2">
    <citation type="journal article" date="2019" name="Plant Cell">
        <title>Single-Organelle Quantification Reveals Stoichiometric and Structural Variability of Carboxysomes Dependent on the Environment.</title>
        <authorList>
            <person name="Sun Y."/>
            <person name="Wollman A.J.M."/>
            <person name="Huang F."/>
            <person name="Leake M.C."/>
            <person name="Liu L.N."/>
        </authorList>
    </citation>
    <scope>DISRUPTION PHENOTYPE</scope>
    <source>
        <strain>ATCC 33912 / PCC 7942 / FACHB-805</strain>
    </source>
</reference>
<reference key="3">
    <citation type="journal article" date="2018" name="Front. Plant Sci.">
        <title>Engineering and Modulating Functional Cyanobacterial CO2-Fixing Organelles.</title>
        <authorList>
            <person name="Fang Y."/>
            <person name="Huang F."/>
            <person name="Faulkner M."/>
            <person name="Jiang Q."/>
            <person name="Dykes G.F."/>
            <person name="Yang M."/>
            <person name="Liu L.N."/>
        </authorList>
    </citation>
    <scope>BIOTECHNOLOGY</scope>
    <source>
        <strain>ATCC 33912 / PCC 7942 / FACHB-805</strain>
    </source>
</reference>
<reference evidence="10 11" key="4">
    <citation type="journal article" date="2013" name="J. Biol. Chem.">
        <title>The structure of CcmP, a tandem bacterial microcompartment domain protein from the beta-carboxysome, forms a subcompartment within a microcompartment.</title>
        <authorList>
            <person name="Cai F."/>
            <person name="Sutter M."/>
            <person name="Cameron J.C."/>
            <person name="Stanley D.N."/>
            <person name="Kinney J.N."/>
            <person name="Kerfeld C.A."/>
        </authorList>
    </citation>
    <scope>X-RAY CRYSTALLOGRAPHY (2.51 ANGSTROMS)</scope>
    <scope>FUNCTION</scope>
    <scope>SUBUNIT</scope>
    <scope>SUBCELLULAR LOCATION</scope>
    <scope>DOMAIN</scope>
    <source>
        <strain>ATCC 33912 / PCC 7942 / FACHB-805</strain>
    </source>
</reference>
<reference evidence="12 13" key="5">
    <citation type="journal article" date="2017" name="J. Exp. Bot.">
        <title>Crystal structures of beta-carboxysome shell protein CcmP: ligand binding correlates with the closed or open central pore.</title>
        <authorList>
            <person name="Larsson A.M."/>
            <person name="Hasse D."/>
            <person name="Valegard K."/>
            <person name="Andersson I."/>
        </authorList>
    </citation>
    <scope>X-RAY CRYSTALLOGRAPHY (1.45 ANGSTROMS)</scope>
    <scope>FUNCTION</scope>
    <scope>SUBUNIT</scope>
    <scope>DOMAIN</scope>
    <source>
        <strain>ATCC 33912 / PCC 7942 / FACHB-805</strain>
    </source>
</reference>
<keyword id="KW-0002">3D-structure</keyword>
<keyword id="KW-1283">Bacterial microcompartment</keyword>
<keyword id="KW-0120">Carbon dioxide fixation</keyword>
<keyword id="KW-1282">Carboxysome</keyword>
<keyword id="KW-0602">Photosynthesis</keyword>
<keyword id="KW-1185">Reference proteome</keyword>
<keyword id="KW-0677">Repeat</keyword>
<accession>Q31QW7</accession>
<feature type="chain" id="PRO_0000451246" description="Carboxysome shell protein CcmP">
    <location>
        <begin position="1"/>
        <end position="213"/>
    </location>
</feature>
<feature type="domain" description="BMC circularly permuted 1" evidence="1">
    <location>
        <begin position="4"/>
        <end position="106"/>
    </location>
</feature>
<feature type="domain" description="BMC circularly permuted 2" evidence="1">
    <location>
        <begin position="107"/>
        <end position="211"/>
    </location>
</feature>
<feature type="short sequence motif" description="Probably important for pore gating" evidence="8 9">
    <location>
        <begin position="69"/>
        <end position="70"/>
    </location>
</feature>
<feature type="site" description="May bind RuBisCO reactants" evidence="8 9">
    <location>
        <position position="18"/>
    </location>
</feature>
<feature type="strand" evidence="14">
    <location>
        <begin position="4"/>
        <end position="13"/>
    </location>
</feature>
<feature type="helix" evidence="14">
    <location>
        <begin position="16"/>
        <end position="25"/>
    </location>
</feature>
<feature type="strand" evidence="14">
    <location>
        <begin position="27"/>
        <end position="29"/>
    </location>
</feature>
<feature type="strand" evidence="14">
    <location>
        <begin position="36"/>
        <end position="44"/>
    </location>
</feature>
<feature type="helix" evidence="14">
    <location>
        <begin position="45"/>
        <end position="47"/>
    </location>
</feature>
<feature type="helix" evidence="14">
    <location>
        <begin position="48"/>
        <end position="58"/>
    </location>
</feature>
<feature type="strand" evidence="14">
    <location>
        <begin position="62"/>
        <end position="68"/>
    </location>
</feature>
<feature type="strand" evidence="14">
    <location>
        <begin position="73"/>
        <end position="80"/>
    </location>
</feature>
<feature type="helix" evidence="14">
    <location>
        <begin position="82"/>
        <end position="96"/>
    </location>
</feature>
<feature type="helix" evidence="14">
    <location>
        <begin position="100"/>
        <end position="102"/>
    </location>
</feature>
<feature type="strand" evidence="14">
    <location>
        <begin position="107"/>
        <end position="114"/>
    </location>
</feature>
<feature type="helix" evidence="14">
    <location>
        <begin position="119"/>
        <end position="126"/>
    </location>
</feature>
<feature type="strand" evidence="14">
    <location>
        <begin position="130"/>
        <end position="132"/>
    </location>
</feature>
<feature type="strand" evidence="14">
    <location>
        <begin position="139"/>
        <end position="147"/>
    </location>
</feature>
<feature type="helix" evidence="14">
    <location>
        <begin position="150"/>
        <end position="161"/>
    </location>
</feature>
<feature type="strand" evidence="14">
    <location>
        <begin position="165"/>
        <end position="170"/>
    </location>
</feature>
<feature type="strand" evidence="14">
    <location>
        <begin position="173"/>
        <end position="182"/>
    </location>
</feature>
<feature type="helix" evidence="14">
    <location>
        <begin position="184"/>
        <end position="200"/>
    </location>
</feature>
<name>CCMP_SYNE7</name>
<gene>
    <name evidence="6" type="primary">ccmP</name>
    <name type="ordered locus">Synpcc7942_0520</name>
</gene>
<organism>
    <name type="scientific">Synechococcus elongatus (strain ATCC 33912 / PCC 7942 / FACHB-805)</name>
    <name type="common">Anacystis nidulans R2</name>
    <dbReference type="NCBI Taxonomy" id="1140"/>
    <lineage>
        <taxon>Bacteria</taxon>
        <taxon>Bacillati</taxon>
        <taxon>Cyanobacteriota</taxon>
        <taxon>Cyanophyceae</taxon>
        <taxon>Synechococcales</taxon>
        <taxon>Synechococcaceae</taxon>
        <taxon>Synechococcus</taxon>
    </lineage>
</organism>
<evidence type="ECO:0000255" key="1">
    <source>
        <dbReference type="PROSITE-ProRule" id="PRU01279"/>
    </source>
</evidence>
<evidence type="ECO:0000269" key="2">
    <source>
    </source>
</evidence>
<evidence type="ECO:0000269" key="3">
    <source>
    </source>
</evidence>
<evidence type="ECO:0000269" key="4">
    <source>
    </source>
</evidence>
<evidence type="ECO:0000269" key="5">
    <source>
    </source>
</evidence>
<evidence type="ECO:0000303" key="6">
    <source>
    </source>
</evidence>
<evidence type="ECO:0000305" key="7"/>
<evidence type="ECO:0000305" key="8">
    <source>
    </source>
</evidence>
<evidence type="ECO:0000305" key="9">
    <source>
    </source>
</evidence>
<evidence type="ECO:0007744" key="10">
    <source>
        <dbReference type="PDB" id="4HT5"/>
    </source>
</evidence>
<evidence type="ECO:0007744" key="11">
    <source>
        <dbReference type="PDB" id="4HT7"/>
    </source>
</evidence>
<evidence type="ECO:0007744" key="12">
    <source>
        <dbReference type="PDB" id="5LSR"/>
    </source>
</evidence>
<evidence type="ECO:0007744" key="13">
    <source>
        <dbReference type="PDB" id="5LT5"/>
    </source>
</evidence>
<evidence type="ECO:0007829" key="14">
    <source>
        <dbReference type="PDB" id="5LT5"/>
    </source>
</evidence>
<sequence>MGVELRSYVYLDNLQRQHASYIGTVATGFLTLPGDASVWIEISPGIEINRMMDIALKAAVVRPGVQFIERLYGLMEVHASNQGEVREAGRAVLSALGLTERDRLKPKIVSSQIIRNIDAHQAQLINRQRRGQMLLAGETLYVLEVQPAAYAALAANEAEKAALINILQVSAIGSFGRLFLGGEERDIIAGSRAAVAALENLSGREHPGDRSRE</sequence>
<dbReference type="EMBL" id="CP000100">
    <property type="protein sequence ID" value="ABB56552.1"/>
    <property type="molecule type" value="Genomic_DNA"/>
</dbReference>
<dbReference type="RefSeq" id="WP_011243312.1">
    <property type="nucleotide sequence ID" value="NZ_JACJTX010000002.1"/>
</dbReference>
<dbReference type="PDB" id="4HT5">
    <property type="method" value="X-ray"/>
    <property type="resolution" value="2.51 A"/>
    <property type="chains" value="A/B/C/D/E/F=1-213"/>
</dbReference>
<dbReference type="PDB" id="4HT7">
    <property type="method" value="X-ray"/>
    <property type="resolution" value="3.30 A"/>
    <property type="chains" value="A/B/C/D/E/F/G/H/I/J/K/L=1-213"/>
</dbReference>
<dbReference type="PDB" id="5LSR">
    <property type="method" value="X-ray"/>
    <property type="resolution" value="1.65 A"/>
    <property type="chains" value="A/B/C=1-213"/>
</dbReference>
<dbReference type="PDB" id="5LT5">
    <property type="method" value="X-ray"/>
    <property type="resolution" value="1.45 A"/>
    <property type="chains" value="A/B=1-213"/>
</dbReference>
<dbReference type="PDBsum" id="4HT5"/>
<dbReference type="PDBsum" id="4HT7"/>
<dbReference type="PDBsum" id="5LSR"/>
<dbReference type="PDBsum" id="5LT5"/>
<dbReference type="SMR" id="Q31QW7"/>
<dbReference type="STRING" id="1140.Synpcc7942_0520"/>
<dbReference type="TCDB" id="1.S.3.1.1">
    <property type="family name" value="the bacterial microcompartment shell/pore-forming protein-3 (bmc-sp3) family"/>
</dbReference>
<dbReference type="PaxDb" id="1140-Synpcc7942_0520"/>
<dbReference type="KEGG" id="syf:Synpcc7942_0520"/>
<dbReference type="eggNOG" id="COG4577">
    <property type="taxonomic scope" value="Bacteria"/>
</dbReference>
<dbReference type="HOGENOM" id="CLU_091281_0_0_3"/>
<dbReference type="OrthoDB" id="5800762at2"/>
<dbReference type="BioCyc" id="SYNEL:SYNPCC7942_0520-MONOMER"/>
<dbReference type="EvolutionaryTrace" id="Q31QW7"/>
<dbReference type="Proteomes" id="UP000889800">
    <property type="component" value="Chromosome"/>
</dbReference>
<dbReference type="GO" id="GO:0031470">
    <property type="term" value="C:carboxysome"/>
    <property type="evidence" value="ECO:0000314"/>
    <property type="project" value="UniProtKB"/>
</dbReference>
<dbReference type="GO" id="GO:0043886">
    <property type="term" value="F:structural constituent of carboxysome shell"/>
    <property type="evidence" value="ECO:0000353"/>
    <property type="project" value="UniProtKB"/>
</dbReference>
<dbReference type="GO" id="GO:0015977">
    <property type="term" value="P:carbon fixation"/>
    <property type="evidence" value="ECO:0007669"/>
    <property type="project" value="UniProtKB-KW"/>
</dbReference>
<dbReference type="GO" id="GO:0015979">
    <property type="term" value="P:photosynthesis"/>
    <property type="evidence" value="ECO:0007669"/>
    <property type="project" value="UniProtKB-KW"/>
</dbReference>
<dbReference type="CDD" id="cd07051">
    <property type="entry name" value="BMC_like_1_repeat1"/>
    <property type="match status" value="1"/>
</dbReference>
<dbReference type="Gene3D" id="3.30.70.1710">
    <property type="match status" value="2"/>
</dbReference>
<dbReference type="InterPro" id="IPR044870">
    <property type="entry name" value="BMC_CP"/>
</dbReference>
<dbReference type="InterPro" id="IPR000249">
    <property type="entry name" value="BMC_dom"/>
</dbReference>
<dbReference type="InterPro" id="IPR037233">
    <property type="entry name" value="CcmK-like_sf"/>
</dbReference>
<dbReference type="SMART" id="SM00877">
    <property type="entry name" value="BMC"/>
    <property type="match status" value="2"/>
</dbReference>
<dbReference type="PROSITE" id="PS51931">
    <property type="entry name" value="BMC_CP"/>
    <property type="match status" value="2"/>
</dbReference>
<protein>
    <recommendedName>
        <fullName evidence="7">Carboxysome shell protein CcmP</fullName>
    </recommendedName>
    <alternativeName>
        <fullName>Carbon dioxide concentrating mechanism protein CcmP</fullName>
    </alternativeName>
</protein>
<proteinExistence type="evidence at protein level"/>
<comment type="function">
    <text evidence="2">Probably part of the carboxysome shell, a polyhedral inclusion where RuBisCO (ribulose bisphosphate carboxylase, rbcL-rbcS) is sequestered. It is thought that this protein controls transport of RuBisCO reactants in and out of the carboxysome; residual densities in the 4 X-ray structures suggest that differing compounds bind in interior pockets, depending on the open or closed state of the pore.</text>
</comment>
<comment type="subunit">
    <text evidence="2 3">A dimer of stacked trimers, the same faces interact.</text>
</comment>
<comment type="subcellular location">
    <subcellularLocation>
        <location evidence="2">Carboxysome</location>
    </subcellularLocation>
    <text evidence="2">This cyanobacterium makes beta-type carboxysomes.</text>
</comment>
<comment type="domain">
    <text evidence="2 3">Contains 2 BMC domains, trimerizes to give a hexamer. Each trimer forms a pore with an opening of about 13 Angstroms in diameter; depending on the conformation of conserved residues Glu-69 and Arg-70 the pore is open or closed. Dimerization of the trimers forms a small barrel-like compartment, accessible via the pore. Barrels with one open and one closed pore or with 2 closed pores have been seen. A pocket that is the right size to loosely bind RuBisCO substrates and products is found between the 2 BMC domains in each monomer.</text>
</comment>
<comment type="disruption phenotype">
    <text evidence="5">Tagging the C-terminus of this protein with a fluroscent tag completely disrupts carboxysome formation.</text>
</comment>
<comment type="biotechnology">
    <text evidence="4">Heterologous expression of 12 carboxysomal genes in E.coli (ccaA, ccmK2, ccmK3, ccmK4, ccmL, ccmM, ccmN, ccmO, ccmP, rbcL, rbcS, rbcX) leads to the formation of bodies that resemble carboxysomes, have densely packed paracrystalline arrays and RuBisCO activity. These structures open the door to generating carboxysomes in plant cells to increase their photosynthesis and productivity, as well as tailoring bacterial microcompartments to specific metabolic needs and molecule delivery. The absence of ccaA, ccmK3, ccmK4, ccmP and rbcX leads to less active RuBisCO.</text>
</comment>
<comment type="similarity">
    <text evidence="1">Belongs to the EutL/PduB family.</text>
</comment>